<dbReference type="EC" id="2.8.1.8" evidence="1"/>
<dbReference type="EMBL" id="CP000284">
    <property type="protein sequence ID" value="ABE50766.1"/>
    <property type="molecule type" value="Genomic_DNA"/>
</dbReference>
<dbReference type="RefSeq" id="WP_011480719.1">
    <property type="nucleotide sequence ID" value="NC_007947.1"/>
</dbReference>
<dbReference type="SMR" id="Q1GYC1"/>
<dbReference type="STRING" id="265072.Mfla_2501"/>
<dbReference type="KEGG" id="mfa:Mfla_2501"/>
<dbReference type="eggNOG" id="COG0320">
    <property type="taxonomic scope" value="Bacteria"/>
</dbReference>
<dbReference type="HOGENOM" id="CLU_033144_2_1_4"/>
<dbReference type="OrthoDB" id="9787898at2"/>
<dbReference type="UniPathway" id="UPA00538">
    <property type="reaction ID" value="UER00593"/>
</dbReference>
<dbReference type="Proteomes" id="UP000002440">
    <property type="component" value="Chromosome"/>
</dbReference>
<dbReference type="GO" id="GO:0005737">
    <property type="term" value="C:cytoplasm"/>
    <property type="evidence" value="ECO:0007669"/>
    <property type="project" value="UniProtKB-SubCell"/>
</dbReference>
<dbReference type="GO" id="GO:0051539">
    <property type="term" value="F:4 iron, 4 sulfur cluster binding"/>
    <property type="evidence" value="ECO:0007669"/>
    <property type="project" value="UniProtKB-UniRule"/>
</dbReference>
<dbReference type="GO" id="GO:0016992">
    <property type="term" value="F:lipoate synthase activity"/>
    <property type="evidence" value="ECO:0007669"/>
    <property type="project" value="UniProtKB-UniRule"/>
</dbReference>
<dbReference type="GO" id="GO:0046872">
    <property type="term" value="F:metal ion binding"/>
    <property type="evidence" value="ECO:0007669"/>
    <property type="project" value="UniProtKB-KW"/>
</dbReference>
<dbReference type="CDD" id="cd01335">
    <property type="entry name" value="Radical_SAM"/>
    <property type="match status" value="1"/>
</dbReference>
<dbReference type="FunFam" id="3.20.20.70:FF:000023">
    <property type="entry name" value="Lipoyl synthase"/>
    <property type="match status" value="1"/>
</dbReference>
<dbReference type="Gene3D" id="3.20.20.70">
    <property type="entry name" value="Aldolase class I"/>
    <property type="match status" value="1"/>
</dbReference>
<dbReference type="HAMAP" id="MF_00206">
    <property type="entry name" value="Lipoyl_synth"/>
    <property type="match status" value="1"/>
</dbReference>
<dbReference type="InterPro" id="IPR013785">
    <property type="entry name" value="Aldolase_TIM"/>
</dbReference>
<dbReference type="InterPro" id="IPR006638">
    <property type="entry name" value="Elp3/MiaA/NifB-like_rSAM"/>
</dbReference>
<dbReference type="InterPro" id="IPR031691">
    <property type="entry name" value="LIAS_N"/>
</dbReference>
<dbReference type="InterPro" id="IPR003698">
    <property type="entry name" value="Lipoyl_synth"/>
</dbReference>
<dbReference type="InterPro" id="IPR007197">
    <property type="entry name" value="rSAM"/>
</dbReference>
<dbReference type="NCBIfam" id="TIGR00510">
    <property type="entry name" value="lipA"/>
    <property type="match status" value="1"/>
</dbReference>
<dbReference type="NCBIfam" id="NF004019">
    <property type="entry name" value="PRK05481.1"/>
    <property type="match status" value="1"/>
</dbReference>
<dbReference type="NCBIfam" id="NF009544">
    <property type="entry name" value="PRK12928.1"/>
    <property type="match status" value="1"/>
</dbReference>
<dbReference type="PANTHER" id="PTHR10949">
    <property type="entry name" value="LIPOYL SYNTHASE"/>
    <property type="match status" value="1"/>
</dbReference>
<dbReference type="PANTHER" id="PTHR10949:SF0">
    <property type="entry name" value="LIPOYL SYNTHASE, MITOCHONDRIAL"/>
    <property type="match status" value="1"/>
</dbReference>
<dbReference type="Pfam" id="PF16881">
    <property type="entry name" value="LIAS_N"/>
    <property type="match status" value="1"/>
</dbReference>
<dbReference type="Pfam" id="PF04055">
    <property type="entry name" value="Radical_SAM"/>
    <property type="match status" value="1"/>
</dbReference>
<dbReference type="PIRSF" id="PIRSF005963">
    <property type="entry name" value="Lipoyl_synth"/>
    <property type="match status" value="1"/>
</dbReference>
<dbReference type="SFLD" id="SFLDF00271">
    <property type="entry name" value="lipoyl_synthase"/>
    <property type="match status" value="1"/>
</dbReference>
<dbReference type="SFLD" id="SFLDS00029">
    <property type="entry name" value="Radical_SAM"/>
    <property type="match status" value="1"/>
</dbReference>
<dbReference type="SMART" id="SM00729">
    <property type="entry name" value="Elp3"/>
    <property type="match status" value="1"/>
</dbReference>
<dbReference type="SUPFAM" id="SSF102114">
    <property type="entry name" value="Radical SAM enzymes"/>
    <property type="match status" value="1"/>
</dbReference>
<dbReference type="PROSITE" id="PS51918">
    <property type="entry name" value="RADICAL_SAM"/>
    <property type="match status" value="1"/>
</dbReference>
<name>LIPA_METFK</name>
<sequence>MTEITERIVPPPRKVAGVKESSAEKMARIPIKIIPMPAMRKPEWIRMKVPDSARFREIKQVLRENNLHTVCEEASCPNIGECFSGGTATFMILGDICTRRCPFCDVSHGKPLPPDANEPENLGRTIAQMRLKYVVITSVDRDDLRDGGAQHFVDCIAAVRAHSPQIKVEILVPDFRGRLDRAIHILKAAPPDVMNHNLETVPRLYKEARPGSDYQNSLDLLKEFGKLHPEVPTKSGLMLGLGETDEEILDVMRDLRAHNVTMLTLGQYLQPSPHHLPVKRFVTPQRFAEFERQALAMGFTHAACGPMVRSSYHADHQAQQAGVNF</sequence>
<evidence type="ECO:0000255" key="1">
    <source>
        <dbReference type="HAMAP-Rule" id="MF_00206"/>
    </source>
</evidence>
<evidence type="ECO:0000255" key="2">
    <source>
        <dbReference type="PROSITE-ProRule" id="PRU01266"/>
    </source>
</evidence>
<proteinExistence type="inferred from homology"/>
<keyword id="KW-0004">4Fe-4S</keyword>
<keyword id="KW-0963">Cytoplasm</keyword>
<keyword id="KW-0408">Iron</keyword>
<keyword id="KW-0411">Iron-sulfur</keyword>
<keyword id="KW-0479">Metal-binding</keyword>
<keyword id="KW-1185">Reference proteome</keyword>
<keyword id="KW-0949">S-adenosyl-L-methionine</keyword>
<keyword id="KW-0808">Transferase</keyword>
<protein>
    <recommendedName>
        <fullName evidence="1">Lipoyl synthase</fullName>
        <ecNumber evidence="1">2.8.1.8</ecNumber>
    </recommendedName>
    <alternativeName>
        <fullName evidence="1">Lip-syn</fullName>
        <shortName evidence="1">LS</shortName>
    </alternativeName>
    <alternativeName>
        <fullName evidence="1">Lipoate synthase</fullName>
    </alternativeName>
    <alternativeName>
        <fullName evidence="1">Lipoic acid synthase</fullName>
    </alternativeName>
    <alternativeName>
        <fullName evidence="1">Sulfur insertion protein LipA</fullName>
    </alternativeName>
</protein>
<reference key="1">
    <citation type="submission" date="2006-03" db="EMBL/GenBank/DDBJ databases">
        <title>Complete sequence of Methylobacillus flagellatus KT.</title>
        <authorList>
            <consortium name="US DOE Joint Genome Institute"/>
            <person name="Copeland A."/>
            <person name="Lucas S."/>
            <person name="Lapidus A."/>
            <person name="Barry K."/>
            <person name="Detter J.C."/>
            <person name="Glavina del Rio T."/>
            <person name="Hammon N."/>
            <person name="Israni S."/>
            <person name="Dalin E."/>
            <person name="Tice H."/>
            <person name="Pitluck S."/>
            <person name="Brettin T."/>
            <person name="Bruce D."/>
            <person name="Han C."/>
            <person name="Tapia R."/>
            <person name="Saunders E."/>
            <person name="Gilna P."/>
            <person name="Schmutz J."/>
            <person name="Larimer F."/>
            <person name="Land M."/>
            <person name="Kyrpides N."/>
            <person name="Anderson I."/>
            <person name="Richardson P."/>
        </authorList>
    </citation>
    <scope>NUCLEOTIDE SEQUENCE [LARGE SCALE GENOMIC DNA]</scope>
    <source>
        <strain>ATCC 51484 / DSM 6875 / VKM B-1610 / KT</strain>
    </source>
</reference>
<feature type="chain" id="PRO_0000325276" description="Lipoyl synthase">
    <location>
        <begin position="1"/>
        <end position="325"/>
    </location>
</feature>
<feature type="domain" description="Radical SAM core" evidence="2">
    <location>
        <begin position="83"/>
        <end position="300"/>
    </location>
</feature>
<feature type="binding site" evidence="1">
    <location>
        <position position="71"/>
    </location>
    <ligand>
        <name>[4Fe-4S] cluster</name>
        <dbReference type="ChEBI" id="CHEBI:49883"/>
        <label>1</label>
    </ligand>
</feature>
<feature type="binding site" evidence="1">
    <location>
        <position position="76"/>
    </location>
    <ligand>
        <name>[4Fe-4S] cluster</name>
        <dbReference type="ChEBI" id="CHEBI:49883"/>
        <label>1</label>
    </ligand>
</feature>
<feature type="binding site" evidence="1">
    <location>
        <position position="82"/>
    </location>
    <ligand>
        <name>[4Fe-4S] cluster</name>
        <dbReference type="ChEBI" id="CHEBI:49883"/>
        <label>1</label>
    </ligand>
</feature>
<feature type="binding site" evidence="1">
    <location>
        <position position="97"/>
    </location>
    <ligand>
        <name>[4Fe-4S] cluster</name>
        <dbReference type="ChEBI" id="CHEBI:49883"/>
        <label>2</label>
        <note>4Fe-4S-S-AdoMet</note>
    </ligand>
</feature>
<feature type="binding site" evidence="1">
    <location>
        <position position="101"/>
    </location>
    <ligand>
        <name>[4Fe-4S] cluster</name>
        <dbReference type="ChEBI" id="CHEBI:49883"/>
        <label>2</label>
        <note>4Fe-4S-S-AdoMet</note>
    </ligand>
</feature>
<feature type="binding site" evidence="1">
    <location>
        <position position="104"/>
    </location>
    <ligand>
        <name>[4Fe-4S] cluster</name>
        <dbReference type="ChEBI" id="CHEBI:49883"/>
        <label>2</label>
        <note>4Fe-4S-S-AdoMet</note>
    </ligand>
</feature>
<feature type="binding site" evidence="1">
    <location>
        <position position="311"/>
    </location>
    <ligand>
        <name>[4Fe-4S] cluster</name>
        <dbReference type="ChEBI" id="CHEBI:49883"/>
        <label>1</label>
    </ligand>
</feature>
<comment type="function">
    <text evidence="1">Catalyzes the radical-mediated insertion of two sulfur atoms into the C-6 and C-8 positions of the octanoyl moiety bound to the lipoyl domains of lipoate-dependent enzymes, thereby converting the octanoylated domains into lipoylated derivatives.</text>
</comment>
<comment type="catalytic activity">
    <reaction evidence="1">
        <text>[[Fe-S] cluster scaffold protein carrying a second [4Fe-4S](2+) cluster] + N(6)-octanoyl-L-lysyl-[protein] + 2 oxidized [2Fe-2S]-[ferredoxin] + 2 S-adenosyl-L-methionine + 4 H(+) = [[Fe-S] cluster scaffold protein] + N(6)-[(R)-dihydrolipoyl]-L-lysyl-[protein] + 4 Fe(3+) + 2 hydrogen sulfide + 2 5'-deoxyadenosine + 2 L-methionine + 2 reduced [2Fe-2S]-[ferredoxin]</text>
        <dbReference type="Rhea" id="RHEA:16585"/>
        <dbReference type="Rhea" id="RHEA-COMP:9928"/>
        <dbReference type="Rhea" id="RHEA-COMP:10000"/>
        <dbReference type="Rhea" id="RHEA-COMP:10001"/>
        <dbReference type="Rhea" id="RHEA-COMP:10475"/>
        <dbReference type="Rhea" id="RHEA-COMP:14568"/>
        <dbReference type="Rhea" id="RHEA-COMP:14569"/>
        <dbReference type="ChEBI" id="CHEBI:15378"/>
        <dbReference type="ChEBI" id="CHEBI:17319"/>
        <dbReference type="ChEBI" id="CHEBI:29034"/>
        <dbReference type="ChEBI" id="CHEBI:29919"/>
        <dbReference type="ChEBI" id="CHEBI:33722"/>
        <dbReference type="ChEBI" id="CHEBI:33737"/>
        <dbReference type="ChEBI" id="CHEBI:33738"/>
        <dbReference type="ChEBI" id="CHEBI:57844"/>
        <dbReference type="ChEBI" id="CHEBI:59789"/>
        <dbReference type="ChEBI" id="CHEBI:78809"/>
        <dbReference type="ChEBI" id="CHEBI:83100"/>
        <dbReference type="EC" id="2.8.1.8"/>
    </reaction>
</comment>
<comment type="cofactor">
    <cofactor evidence="1">
        <name>[4Fe-4S] cluster</name>
        <dbReference type="ChEBI" id="CHEBI:49883"/>
    </cofactor>
    <text evidence="1">Binds 2 [4Fe-4S] clusters per subunit. One cluster is coordinated with 3 cysteines and an exchangeable S-adenosyl-L-methionine.</text>
</comment>
<comment type="pathway">
    <text evidence="1">Protein modification; protein lipoylation via endogenous pathway; protein N(6)-(lipoyl)lysine from octanoyl-[acyl-carrier-protein]: step 2/2.</text>
</comment>
<comment type="subcellular location">
    <subcellularLocation>
        <location evidence="1">Cytoplasm</location>
    </subcellularLocation>
</comment>
<comment type="similarity">
    <text evidence="1">Belongs to the radical SAM superfamily. Lipoyl synthase family.</text>
</comment>
<gene>
    <name evidence="1" type="primary">lipA</name>
    <name type="ordered locus">Mfla_2501</name>
</gene>
<organism>
    <name type="scientific">Methylobacillus flagellatus (strain ATCC 51484 / DSM 6875 / VKM B-1610 / KT)</name>
    <dbReference type="NCBI Taxonomy" id="265072"/>
    <lineage>
        <taxon>Bacteria</taxon>
        <taxon>Pseudomonadati</taxon>
        <taxon>Pseudomonadota</taxon>
        <taxon>Betaproteobacteria</taxon>
        <taxon>Nitrosomonadales</taxon>
        <taxon>Methylophilaceae</taxon>
        <taxon>Methylobacillus</taxon>
    </lineage>
</organism>
<accession>Q1GYC1</accession>